<comment type="function">
    <text evidence="1">Essential cell division protein. May link together the upstream cell division proteins, which are predominantly cytoplasmic, with the downstream cell division proteins, which are predominantly periplasmic.</text>
</comment>
<comment type="subunit">
    <text evidence="1">Part of a complex composed of FtsB, FtsL and FtsQ.</text>
</comment>
<comment type="subcellular location">
    <subcellularLocation>
        <location evidence="1">Cell inner membrane</location>
        <topology evidence="1">Single-pass type II membrane protein</topology>
    </subcellularLocation>
    <text evidence="1">Localizes to the division septum.</text>
</comment>
<comment type="similarity">
    <text evidence="1">Belongs to the FtsB family.</text>
</comment>
<organism>
    <name type="scientific">Mannheimia succiniciproducens (strain KCTC 0769BP / MBEL55E)</name>
    <dbReference type="NCBI Taxonomy" id="221988"/>
    <lineage>
        <taxon>Bacteria</taxon>
        <taxon>Pseudomonadati</taxon>
        <taxon>Pseudomonadota</taxon>
        <taxon>Gammaproteobacteria</taxon>
        <taxon>Pasteurellales</taxon>
        <taxon>Pasteurellaceae</taxon>
        <taxon>Basfia</taxon>
    </lineage>
</organism>
<feature type="chain" id="PRO_0000214448" description="Cell division protein FtsB">
    <location>
        <begin position="1"/>
        <end position="95"/>
    </location>
</feature>
<feature type="topological domain" description="Cytoplasmic" evidence="1">
    <location>
        <begin position="1"/>
        <end position="3"/>
    </location>
</feature>
<feature type="transmembrane region" description="Helical" evidence="1">
    <location>
        <begin position="4"/>
        <end position="21"/>
    </location>
</feature>
<feature type="topological domain" description="Periplasmic" evidence="1">
    <location>
        <begin position="22"/>
        <end position="95"/>
    </location>
</feature>
<feature type="coiled-coil region" evidence="1">
    <location>
        <begin position="28"/>
        <end position="62"/>
    </location>
</feature>
<sequence length="95" mass="11251">MRLFILILSAILLLFQYDLWFGKNGYLDYKETAEEIAMHKAENTKLSQRNQVVAAEIRDLKDGVEAIQERARLQYELVKPNETFYRIAKENKDNR</sequence>
<proteinExistence type="inferred from homology"/>
<dbReference type="EMBL" id="AE016827">
    <property type="protein sequence ID" value="AAU38883.1"/>
    <property type="molecule type" value="Genomic_DNA"/>
</dbReference>
<dbReference type="RefSeq" id="WP_011201425.1">
    <property type="nucleotide sequence ID" value="NC_006300.1"/>
</dbReference>
<dbReference type="SMR" id="Q65Q77"/>
<dbReference type="STRING" id="221988.MS2276"/>
<dbReference type="KEGG" id="msu:MS2276"/>
<dbReference type="eggNOG" id="COG2919">
    <property type="taxonomic scope" value="Bacteria"/>
</dbReference>
<dbReference type="HOGENOM" id="CLU_134863_5_2_6"/>
<dbReference type="OrthoDB" id="7061211at2"/>
<dbReference type="Proteomes" id="UP000000607">
    <property type="component" value="Chromosome"/>
</dbReference>
<dbReference type="GO" id="GO:0032153">
    <property type="term" value="C:cell division site"/>
    <property type="evidence" value="ECO:0007669"/>
    <property type="project" value="UniProtKB-UniRule"/>
</dbReference>
<dbReference type="GO" id="GO:0030428">
    <property type="term" value="C:cell septum"/>
    <property type="evidence" value="ECO:0007669"/>
    <property type="project" value="TreeGrafter"/>
</dbReference>
<dbReference type="GO" id="GO:0005886">
    <property type="term" value="C:plasma membrane"/>
    <property type="evidence" value="ECO:0007669"/>
    <property type="project" value="UniProtKB-SubCell"/>
</dbReference>
<dbReference type="GO" id="GO:0043093">
    <property type="term" value="P:FtsZ-dependent cytokinesis"/>
    <property type="evidence" value="ECO:0007669"/>
    <property type="project" value="UniProtKB-UniRule"/>
</dbReference>
<dbReference type="HAMAP" id="MF_00599">
    <property type="entry name" value="FtsB"/>
    <property type="match status" value="1"/>
</dbReference>
<dbReference type="InterPro" id="IPR023081">
    <property type="entry name" value="Cell_div_FtsB"/>
</dbReference>
<dbReference type="InterPro" id="IPR007060">
    <property type="entry name" value="FtsL/DivIC"/>
</dbReference>
<dbReference type="NCBIfam" id="NF002058">
    <property type="entry name" value="PRK00888.1"/>
    <property type="match status" value="1"/>
</dbReference>
<dbReference type="PANTHER" id="PTHR37485">
    <property type="entry name" value="CELL DIVISION PROTEIN FTSB"/>
    <property type="match status" value="1"/>
</dbReference>
<dbReference type="PANTHER" id="PTHR37485:SF1">
    <property type="entry name" value="CELL DIVISION PROTEIN FTSB"/>
    <property type="match status" value="1"/>
</dbReference>
<dbReference type="Pfam" id="PF04977">
    <property type="entry name" value="DivIC"/>
    <property type="match status" value="1"/>
</dbReference>
<name>FTSB_MANSM</name>
<protein>
    <recommendedName>
        <fullName evidence="1">Cell division protein FtsB</fullName>
    </recommendedName>
</protein>
<evidence type="ECO:0000255" key="1">
    <source>
        <dbReference type="HAMAP-Rule" id="MF_00599"/>
    </source>
</evidence>
<reference key="1">
    <citation type="journal article" date="2004" name="Nat. Biotechnol.">
        <title>The genome sequence of the capnophilic rumen bacterium Mannheimia succiniciproducens.</title>
        <authorList>
            <person name="Hong S.H."/>
            <person name="Kim J.S."/>
            <person name="Lee S.Y."/>
            <person name="In Y.H."/>
            <person name="Choi S.S."/>
            <person name="Rih J.-K."/>
            <person name="Kim C.H."/>
            <person name="Jeong H."/>
            <person name="Hur C.G."/>
            <person name="Kim J.J."/>
        </authorList>
    </citation>
    <scope>NUCLEOTIDE SEQUENCE [LARGE SCALE GENOMIC DNA]</scope>
    <source>
        <strain>KCTC 0769BP / MBEL55E</strain>
    </source>
</reference>
<accession>Q65Q77</accession>
<keyword id="KW-0131">Cell cycle</keyword>
<keyword id="KW-0132">Cell division</keyword>
<keyword id="KW-0997">Cell inner membrane</keyword>
<keyword id="KW-1003">Cell membrane</keyword>
<keyword id="KW-0175">Coiled coil</keyword>
<keyword id="KW-0472">Membrane</keyword>
<keyword id="KW-0812">Transmembrane</keyword>
<keyword id="KW-1133">Transmembrane helix</keyword>
<gene>
    <name evidence="1" type="primary">ftsB</name>
    <name type="ordered locus">MS2276</name>
</gene>